<dbReference type="EC" id="1.14.-.-"/>
<dbReference type="EMBL" id="AE000516">
    <property type="protein sequence ID" value="AAK46201.1"/>
    <property type="status" value="ALT_INIT"/>
    <property type="molecule type" value="Genomic_DNA"/>
</dbReference>
<dbReference type="PIR" id="E70515">
    <property type="entry name" value="E70515"/>
</dbReference>
<dbReference type="RefSeq" id="WP_003409406.1">
    <property type="nucleotide sequence ID" value="NZ_KK341227.1"/>
</dbReference>
<dbReference type="SMR" id="P9WPL8"/>
<dbReference type="KEGG" id="mtc:MT1929"/>
<dbReference type="PATRIC" id="fig|83331.31.peg.2076"/>
<dbReference type="HOGENOM" id="CLU_033716_2_0_11"/>
<dbReference type="Proteomes" id="UP000001020">
    <property type="component" value="Chromosome"/>
</dbReference>
<dbReference type="GO" id="GO:0036199">
    <property type="term" value="F:cholest-4-en-3-one 26-monooxygenase activity"/>
    <property type="evidence" value="ECO:0007669"/>
    <property type="project" value="TreeGrafter"/>
</dbReference>
<dbReference type="GO" id="GO:0020037">
    <property type="term" value="F:heme binding"/>
    <property type="evidence" value="ECO:0007669"/>
    <property type="project" value="InterPro"/>
</dbReference>
<dbReference type="GO" id="GO:0005506">
    <property type="term" value="F:iron ion binding"/>
    <property type="evidence" value="ECO:0007669"/>
    <property type="project" value="InterPro"/>
</dbReference>
<dbReference type="GO" id="GO:0008395">
    <property type="term" value="F:steroid hydroxylase activity"/>
    <property type="evidence" value="ECO:0007669"/>
    <property type="project" value="TreeGrafter"/>
</dbReference>
<dbReference type="GO" id="GO:0006707">
    <property type="term" value="P:cholesterol catabolic process"/>
    <property type="evidence" value="ECO:0007669"/>
    <property type="project" value="TreeGrafter"/>
</dbReference>
<dbReference type="CDD" id="cd20625">
    <property type="entry name" value="CYP164-like"/>
    <property type="match status" value="1"/>
</dbReference>
<dbReference type="FunFam" id="1.10.630.10:FF:000018">
    <property type="entry name" value="Cytochrome P450 monooxygenase"/>
    <property type="match status" value="1"/>
</dbReference>
<dbReference type="Gene3D" id="1.10.630.10">
    <property type="entry name" value="Cytochrome P450"/>
    <property type="match status" value="1"/>
</dbReference>
<dbReference type="InterPro" id="IPR001128">
    <property type="entry name" value="Cyt_P450"/>
</dbReference>
<dbReference type="InterPro" id="IPR002397">
    <property type="entry name" value="Cyt_P450_B"/>
</dbReference>
<dbReference type="InterPro" id="IPR017972">
    <property type="entry name" value="Cyt_P450_CS"/>
</dbReference>
<dbReference type="InterPro" id="IPR036396">
    <property type="entry name" value="Cyt_P450_sf"/>
</dbReference>
<dbReference type="PANTHER" id="PTHR46696:SF4">
    <property type="entry name" value="BIOTIN BIOSYNTHESIS CYTOCHROME P450"/>
    <property type="match status" value="1"/>
</dbReference>
<dbReference type="PANTHER" id="PTHR46696">
    <property type="entry name" value="P450, PUTATIVE (EUROFUNG)-RELATED"/>
    <property type="match status" value="1"/>
</dbReference>
<dbReference type="Pfam" id="PF00067">
    <property type="entry name" value="p450"/>
    <property type="match status" value="1"/>
</dbReference>
<dbReference type="PRINTS" id="PR00359">
    <property type="entry name" value="BP450"/>
</dbReference>
<dbReference type="SUPFAM" id="SSF48264">
    <property type="entry name" value="Cytochrome P450"/>
    <property type="match status" value="1"/>
</dbReference>
<dbReference type="PROSITE" id="PS00086">
    <property type="entry name" value="CYTOCHROME_P450"/>
    <property type="match status" value="1"/>
</dbReference>
<comment type="cofactor">
    <cofactor evidence="1">
        <name>heme</name>
        <dbReference type="ChEBI" id="CHEBI:30413"/>
    </cofactor>
</comment>
<comment type="similarity">
    <text evidence="2">Belongs to the cytochrome P450 family.</text>
</comment>
<comment type="sequence caution" evidence="2">
    <conflict type="erroneous initiation">
        <sequence resource="EMBL-CDS" id="AAK46201"/>
    </conflict>
</comment>
<keyword id="KW-0349">Heme</keyword>
<keyword id="KW-0408">Iron</keyword>
<keyword id="KW-0479">Metal-binding</keyword>
<keyword id="KW-0503">Monooxygenase</keyword>
<keyword id="KW-0560">Oxidoreductase</keyword>
<keyword id="KW-1185">Reference proteome</keyword>
<feature type="chain" id="PRO_0000426929" description="Putative cytochrome P450 140">
    <location>
        <begin position="1"/>
        <end position="438"/>
    </location>
</feature>
<feature type="binding site" description="axial binding residue" evidence="1">
    <location>
        <position position="381"/>
    </location>
    <ligand>
        <name>heme</name>
        <dbReference type="ChEBI" id="CHEBI:30413"/>
    </ligand>
    <ligandPart>
        <name>Fe</name>
        <dbReference type="ChEBI" id="CHEBI:18248"/>
    </ligandPart>
</feature>
<proteinExistence type="inferred from homology"/>
<gene>
    <name type="primary">cyp140</name>
    <name type="ordered locus">MT1929</name>
</gene>
<accession>P9WPL8</accession>
<accession>L0T9I7</accession>
<accession>O08464</accession>
<accession>P63721</accession>
<organism>
    <name type="scientific">Mycobacterium tuberculosis (strain CDC 1551 / Oshkosh)</name>
    <dbReference type="NCBI Taxonomy" id="83331"/>
    <lineage>
        <taxon>Bacteria</taxon>
        <taxon>Bacillati</taxon>
        <taxon>Actinomycetota</taxon>
        <taxon>Actinomycetes</taxon>
        <taxon>Mycobacteriales</taxon>
        <taxon>Mycobacteriaceae</taxon>
        <taxon>Mycobacterium</taxon>
        <taxon>Mycobacterium tuberculosis complex</taxon>
    </lineage>
</organism>
<evidence type="ECO:0000250" key="1"/>
<evidence type="ECO:0000305" key="2"/>
<reference key="1">
    <citation type="journal article" date="2002" name="J. Bacteriol.">
        <title>Whole-genome comparison of Mycobacterium tuberculosis clinical and laboratory strains.</title>
        <authorList>
            <person name="Fleischmann R.D."/>
            <person name="Alland D."/>
            <person name="Eisen J.A."/>
            <person name="Carpenter L."/>
            <person name="White O."/>
            <person name="Peterson J.D."/>
            <person name="DeBoy R.T."/>
            <person name="Dodson R.J."/>
            <person name="Gwinn M.L."/>
            <person name="Haft D.H."/>
            <person name="Hickey E.K."/>
            <person name="Kolonay J.F."/>
            <person name="Nelson W.C."/>
            <person name="Umayam L.A."/>
            <person name="Ermolaeva M.D."/>
            <person name="Salzberg S.L."/>
            <person name="Delcher A."/>
            <person name="Utterback T.R."/>
            <person name="Weidman J.F."/>
            <person name="Khouri H.M."/>
            <person name="Gill J."/>
            <person name="Mikula A."/>
            <person name="Bishai W."/>
            <person name="Jacobs W.R. Jr."/>
            <person name="Venter J.C."/>
            <person name="Fraser C.M."/>
        </authorList>
    </citation>
    <scope>NUCLEOTIDE SEQUENCE [LARGE SCALE GENOMIC DNA]</scope>
    <source>
        <strain>CDC 1551 / Oshkosh</strain>
    </source>
</reference>
<protein>
    <recommendedName>
        <fullName>Putative cytochrome P450 140</fullName>
        <ecNumber>1.14.-.-</ecNumber>
    </recommendedName>
</protein>
<name>CP140_MYCTO</name>
<sequence length="438" mass="48872">MKDKLHWLAMHGVIRGIAAIGIRRGDLQARLIADPAVATDPVPFYDEVRSHGALVRNRANYLTVDHRLAHDLLRSDDFRVVSFGENLPPPLRWLERRTRGDQLHPLREPSLLAVEPPDHTRYRKTVSAVFTSRAVSALRDLVEQTAINLLDRFAEQPGIVDVVGRYCSQLPIVVISEILGVPEHDRPRVLEFGELAAPSLDIGIPWRQYLRVQQGIRGFDCWLEGHLQQLRHAPGDDLMSQLIQIAESGDNETQLDETELRAIAGLVLVAGFETTVNLLGNGIRMLLDTPEHLATLRQHPELWPNTVEEILRLDSPVQLTARVACRDVEVAGVRIKRGEVVVIYLAAANRDPAVFPDPHRFDIERPNAGRHLAFSTGRHFCLGAALARAEGEVGLRTFFDRFPDVRAAGAGSRRDTRVLRGWSTLPVTLGPARSMVSP</sequence>